<sequence>MAAAAAVEAAAPMGALWGLVHDFVVGQQEGPADQVAADVKSGNYTVLQVVEALGSSLENPEPRTRARAIQLLSQVLLHCHTLLLEKEVVHLILFYENRLKDHHLVIPSVLQGLKALSLCVALPPGLAVSVLKAIFQEVHVQSLPQVDRHTVYNIITNFMRTREEELKSLGADFTFGFIQVMDGEKDPRNLLVAFRIVHDLISRDYSLGPFVEELFEVTSCYFPIDFTPPPNDPHGIQREDLILSLRAVLASTPRFAEFLLPLLIEKVDSEVLSAKLDSLQTLNACCAVYGQKELKDFLPSLWASIRREVFQTASERVEAEGLAALHSLTACLSRSVLRADAEDLLDSFLSNILQDCRHHLCEPDMKLVWPSAKLLQAAAGASARACDSVTSNVLPLLLEQFHKHSQSSQRRTILEMLLGFLKLQQKWSYEDKDQRPLNGFKDQLCSLVFMALTDPSTQLQLVGIRTLTVLGAQPDLLSYEDLELAVGHLYRLSFLKEDSQSCRVAALEASGTLAALYPVAFSSHLVPKLAEELRVGESNLTNGDEPTQCSRHLCCLQALSAVSTHPSIVKETLPLLLQHLWQVNRGNMVAQSSDVIAVCQSLRQMAEKCQQDPESCWYFHQTAIPCLLALAVQASMPEKEPSVLRKVLLEDEVLAAMVSVIGTATTHLSPELAAQSVTHIVPLFLDGNVSFLPENSFPSRFQPFQDGSSGQRRLIALLMAFVCSLPRNVEIPQLNQLMRELLELSCCHSCPFSSTAAAKCFAGLLNKHPAGQQLDEFLQLAVDKVEAGLGSGPCRSQAFTLLLWVTKALVLRYHPLSSCLTARLMGLLSDPELGPAAADGFSLLMSDCTDVLTRAGHAEVRIMFRQRFFTDNVPALVQGFHAAPQDVKPNYLKGLSHVLNRLPKPVLLPELPTLLSLLLEALSCPDCVVQLSTLSCLQPLLLEAPQVMSLHVDTLVTKFLNLSSSPSMAVRIAALQCMHALTRLPTPVLLPYKPQVIRALAKPLDDKKRLVRKEAVSARGEWFLLGSPGS</sequence>
<dbReference type="EMBL" id="AJ306408">
    <property type="protein sequence ID" value="CAC29239.1"/>
    <property type="status" value="ALT_FRAME"/>
    <property type="molecule type" value="mRNA"/>
</dbReference>
<dbReference type="EMBL" id="AF357881">
    <property type="protein sequence ID" value="AAK70402.1"/>
    <property type="molecule type" value="mRNA"/>
</dbReference>
<dbReference type="EMBL" id="AF319947">
    <property type="protein sequence ID" value="AAK52668.1"/>
    <property type="molecule type" value="mRNA"/>
</dbReference>
<dbReference type="EMBL" id="AK027710">
    <property type="protein sequence ID" value="BAB55315.1"/>
    <property type="status" value="ALT_INIT"/>
    <property type="molecule type" value="mRNA"/>
</dbReference>
<dbReference type="EMBL" id="AK056244">
    <property type="protein sequence ID" value="BAG51657.1"/>
    <property type="status" value="ALT_INIT"/>
    <property type="molecule type" value="mRNA"/>
</dbReference>
<dbReference type="EMBL" id="AK056581">
    <property type="protein sequence ID" value="BAB71223.1"/>
    <property type="status" value="ALT_SEQ"/>
    <property type="molecule type" value="mRNA"/>
</dbReference>
<dbReference type="EMBL" id="AK298995">
    <property type="protein sequence ID" value="BAG61084.1"/>
    <property type="molecule type" value="mRNA"/>
</dbReference>
<dbReference type="EMBL" id="AK304287">
    <property type="protein sequence ID" value="BAG65145.1"/>
    <property type="molecule type" value="mRNA"/>
</dbReference>
<dbReference type="EMBL" id="AY974244">
    <property type="protein sequence ID" value="AAX59033.1"/>
    <property type="molecule type" value="Genomic_DNA"/>
</dbReference>
<dbReference type="EMBL" id="AL355490">
    <property type="status" value="NOT_ANNOTATED_CDS"/>
    <property type="molecule type" value="Genomic_DNA"/>
</dbReference>
<dbReference type="EMBL" id="AL359388">
    <property type="status" value="NOT_ANNOTATED_CDS"/>
    <property type="molecule type" value="Genomic_DNA"/>
</dbReference>
<dbReference type="EMBL" id="CH471066">
    <property type="protein sequence ID" value="EAW49924.1"/>
    <property type="molecule type" value="Genomic_DNA"/>
</dbReference>
<dbReference type="EMBL" id="CH471066">
    <property type="protein sequence ID" value="EAW49927.1"/>
    <property type="molecule type" value="Genomic_DNA"/>
</dbReference>
<dbReference type="EMBL" id="CH471066">
    <property type="protein sequence ID" value="EAW49928.1"/>
    <property type="molecule type" value="Genomic_DNA"/>
</dbReference>
<dbReference type="EMBL" id="BC002692">
    <property type="protein sequence ID" value="AAH02692.1"/>
    <property type="molecule type" value="mRNA"/>
</dbReference>
<dbReference type="EMBL" id="BC006575">
    <property type="protein sequence ID" value="AAH06575.2"/>
    <property type="molecule type" value="mRNA"/>
</dbReference>
<dbReference type="EMBL" id="BC009396">
    <property type="protein sequence ID" value="AAH09396.2"/>
    <property type="molecule type" value="mRNA"/>
</dbReference>
<dbReference type="EMBL" id="BC080532">
    <property type="protein sequence ID" value="AAH80532.1"/>
    <property type="status" value="ALT_SEQ"/>
    <property type="molecule type" value="mRNA"/>
</dbReference>
<dbReference type="EMBL" id="BC117129">
    <property type="protein sequence ID" value="AAI17130.1"/>
    <property type="molecule type" value="mRNA"/>
</dbReference>
<dbReference type="CCDS" id="CCDS73177.1">
    <molecule id="Q96T76-9"/>
</dbReference>
<dbReference type="CCDS" id="CCDS7464.1">
    <molecule id="Q96T76-1"/>
</dbReference>
<dbReference type="CCDS" id="CCDS81493.1">
    <molecule id="Q96T76-5"/>
</dbReference>
<dbReference type="RefSeq" id="NP_001276332.1">
    <molecule id="Q96T76-9"/>
    <property type="nucleotide sequence ID" value="NM_001289403.2"/>
</dbReference>
<dbReference type="RefSeq" id="NP_001276333.1">
    <property type="nucleotide sequence ID" value="NM_001289404.1"/>
</dbReference>
<dbReference type="RefSeq" id="NP_001276334.1">
    <molecule id="Q96T76-1"/>
    <property type="nucleotide sequence ID" value="NM_001289405.2"/>
</dbReference>
<dbReference type="RefSeq" id="NP_001317057.1">
    <molecule id="Q96T76-5"/>
    <property type="nucleotide sequence ID" value="NM_001330128.2"/>
</dbReference>
<dbReference type="RefSeq" id="NP_071757.4">
    <molecule id="Q96T76-1"/>
    <property type="nucleotide sequence ID" value="NM_022362.4"/>
</dbReference>
<dbReference type="RefSeq" id="XP_016872013.1">
    <property type="nucleotide sequence ID" value="XM_017016524.1"/>
</dbReference>
<dbReference type="SMR" id="Q96T76"/>
<dbReference type="BioGRID" id="122103">
    <property type="interactions" value="332"/>
</dbReference>
<dbReference type="ComplexPortal" id="CPX-2837">
    <property type="entry name" value="CIAO1-CIAO2B-CIAO3-MMS19 cytosolic iron-sulfur protein assembly complex"/>
</dbReference>
<dbReference type="CORUM" id="Q96T76"/>
<dbReference type="FunCoup" id="Q96T76">
    <property type="interactions" value="3946"/>
</dbReference>
<dbReference type="IntAct" id="Q96T76">
    <property type="interactions" value="89"/>
</dbReference>
<dbReference type="MINT" id="Q96T76"/>
<dbReference type="STRING" id="9606.ENSP00000359818"/>
<dbReference type="GlyGen" id="Q96T76">
    <property type="glycosylation" value="1 site, 1 O-linked glycan (1 site)"/>
</dbReference>
<dbReference type="iPTMnet" id="Q96T76"/>
<dbReference type="MetOSite" id="Q96T76"/>
<dbReference type="PhosphoSitePlus" id="Q96T76"/>
<dbReference type="SwissPalm" id="Q96T76"/>
<dbReference type="BioMuta" id="MMS19"/>
<dbReference type="DMDM" id="150421597"/>
<dbReference type="jPOST" id="Q96T76"/>
<dbReference type="MassIVE" id="Q96T76"/>
<dbReference type="PaxDb" id="9606-ENSP00000412698"/>
<dbReference type="PeptideAtlas" id="Q96T76"/>
<dbReference type="ProteomicsDB" id="30403"/>
<dbReference type="ProteomicsDB" id="78210">
    <molecule id="Q96T76-1"/>
</dbReference>
<dbReference type="ProteomicsDB" id="78211">
    <molecule id="Q96T76-5"/>
</dbReference>
<dbReference type="ProteomicsDB" id="78212">
    <molecule id="Q96T76-6"/>
</dbReference>
<dbReference type="ProteomicsDB" id="78213">
    <molecule id="Q96T76-7"/>
</dbReference>
<dbReference type="Pumba" id="Q96T76"/>
<dbReference type="TopDownProteomics" id="Q96T76-6">
    <molecule id="Q96T76-6"/>
</dbReference>
<dbReference type="Antibodypedia" id="30936">
    <property type="antibodies" value="175 antibodies from 27 providers"/>
</dbReference>
<dbReference type="DNASU" id="64210"/>
<dbReference type="Ensembl" id="ENST00000327238.14">
    <molecule id="Q96T76-5"/>
    <property type="protein sequence ID" value="ENSP00000320059.10"/>
    <property type="gene ID" value="ENSG00000155229.21"/>
</dbReference>
<dbReference type="Ensembl" id="ENST00000355839.10">
    <molecule id="Q96T76-9"/>
    <property type="protein sequence ID" value="ENSP00000348097.6"/>
    <property type="gene ID" value="ENSG00000155229.21"/>
</dbReference>
<dbReference type="Ensembl" id="ENST00000370782.6">
    <molecule id="Q96T76-1"/>
    <property type="protein sequence ID" value="ENSP00000359818.1"/>
    <property type="gene ID" value="ENSG00000155229.21"/>
</dbReference>
<dbReference type="Ensembl" id="ENST00000415383.5">
    <molecule id="Q96T76-6"/>
    <property type="protein sequence ID" value="ENSP00000395045.1"/>
    <property type="gene ID" value="ENSG00000155229.21"/>
</dbReference>
<dbReference type="Ensembl" id="ENST00000438925.7">
    <molecule id="Q96T76-1"/>
    <property type="protein sequence ID" value="ENSP00000412698.2"/>
    <property type="gene ID" value="ENSG00000155229.21"/>
</dbReference>
<dbReference type="Ensembl" id="ENST00000441194.5">
    <molecule id="Q96T76-6"/>
    <property type="protein sequence ID" value="ENSP00000413801.1"/>
    <property type="gene ID" value="ENSG00000155229.21"/>
</dbReference>
<dbReference type="GeneID" id="64210"/>
<dbReference type="KEGG" id="hsa:64210"/>
<dbReference type="MANE-Select" id="ENST00000438925.7">
    <property type="protein sequence ID" value="ENSP00000412698.2"/>
    <property type="RefSeq nucleotide sequence ID" value="NM_022362.5"/>
    <property type="RefSeq protein sequence ID" value="NP_071757.4"/>
</dbReference>
<dbReference type="UCSC" id="uc001kns.5">
    <molecule id="Q96T76-1"/>
    <property type="organism name" value="human"/>
</dbReference>
<dbReference type="AGR" id="HGNC:13824"/>
<dbReference type="CTD" id="64210"/>
<dbReference type="DisGeNET" id="64210"/>
<dbReference type="GeneCards" id="MMS19"/>
<dbReference type="HGNC" id="HGNC:13824">
    <property type="gene designation" value="MMS19"/>
</dbReference>
<dbReference type="HPA" id="ENSG00000155229">
    <property type="expression patterns" value="Low tissue specificity"/>
</dbReference>
<dbReference type="MIM" id="614777">
    <property type="type" value="gene"/>
</dbReference>
<dbReference type="neXtProt" id="NX_Q96T76"/>
<dbReference type="OpenTargets" id="ENSG00000155229"/>
<dbReference type="PharmGKB" id="PA162395974"/>
<dbReference type="VEuPathDB" id="HostDB:ENSG00000155229"/>
<dbReference type="eggNOG" id="KOG1967">
    <property type="taxonomic scope" value="Eukaryota"/>
</dbReference>
<dbReference type="GeneTree" id="ENSGT00390000015583"/>
<dbReference type="HOGENOM" id="CLU_3299103_0_0_1"/>
<dbReference type="InParanoid" id="Q96T76"/>
<dbReference type="OMA" id="FSFMPEF"/>
<dbReference type="OrthoDB" id="342900at2759"/>
<dbReference type="PAN-GO" id="Q96T76">
    <property type="GO annotations" value="4 GO annotations based on evolutionary models"/>
</dbReference>
<dbReference type="PhylomeDB" id="Q96T76"/>
<dbReference type="TreeFam" id="TF314469"/>
<dbReference type="PathwayCommons" id="Q96T76"/>
<dbReference type="Reactome" id="R-HSA-2564830">
    <property type="pathway name" value="Cytosolic iron-sulfur cluster assembly"/>
</dbReference>
<dbReference type="SignaLink" id="Q96T76"/>
<dbReference type="BioGRID-ORCS" id="64210">
    <property type="hits" value="600 hits in 1171 CRISPR screens"/>
</dbReference>
<dbReference type="ChiTaRS" id="MMS19">
    <property type="organism name" value="human"/>
</dbReference>
<dbReference type="GeneWiki" id="MMS19"/>
<dbReference type="GenomeRNAi" id="64210"/>
<dbReference type="Pharos" id="Q96T76">
    <property type="development level" value="Tbio"/>
</dbReference>
<dbReference type="PRO" id="PR:Q96T76"/>
<dbReference type="Proteomes" id="UP000005640">
    <property type="component" value="Chromosome 10"/>
</dbReference>
<dbReference type="RNAct" id="Q96T76">
    <property type="molecule type" value="protein"/>
</dbReference>
<dbReference type="Bgee" id="ENSG00000155229">
    <property type="expression patterns" value="Expressed in right hemisphere of cerebellum and 205 other cell types or tissues"/>
</dbReference>
<dbReference type="ExpressionAtlas" id="Q96T76">
    <property type="expression patterns" value="baseline and differential"/>
</dbReference>
<dbReference type="GO" id="GO:0005813">
    <property type="term" value="C:centrosome"/>
    <property type="evidence" value="ECO:0007669"/>
    <property type="project" value="UniProtKB-SubCell"/>
</dbReference>
<dbReference type="GO" id="GO:0005737">
    <property type="term" value="C:cytoplasm"/>
    <property type="evidence" value="ECO:0000314"/>
    <property type="project" value="UniProtKB"/>
</dbReference>
<dbReference type="GO" id="GO:0005829">
    <property type="term" value="C:cytosol"/>
    <property type="evidence" value="ECO:0000314"/>
    <property type="project" value="HPA"/>
</dbReference>
<dbReference type="GO" id="GO:0097361">
    <property type="term" value="C:cytosolic [4Fe-4S] assembly targeting complex"/>
    <property type="evidence" value="ECO:0000314"/>
    <property type="project" value="UniProtKB"/>
</dbReference>
<dbReference type="GO" id="GO:0016020">
    <property type="term" value="C:membrane"/>
    <property type="evidence" value="ECO:0007005"/>
    <property type="project" value="UniProtKB"/>
</dbReference>
<dbReference type="GO" id="GO:0071817">
    <property type="term" value="C:MMXD complex"/>
    <property type="evidence" value="ECO:0000314"/>
    <property type="project" value="UniProtKB"/>
</dbReference>
<dbReference type="GO" id="GO:0005654">
    <property type="term" value="C:nucleoplasm"/>
    <property type="evidence" value="ECO:0000314"/>
    <property type="project" value="HPA"/>
</dbReference>
<dbReference type="GO" id="GO:0005634">
    <property type="term" value="C:nucleus"/>
    <property type="evidence" value="ECO:0000314"/>
    <property type="project" value="UniProtKB"/>
</dbReference>
<dbReference type="GO" id="GO:0005819">
    <property type="term" value="C:spindle"/>
    <property type="evidence" value="ECO:0000314"/>
    <property type="project" value="UniProtKB"/>
</dbReference>
<dbReference type="GO" id="GO:0005675">
    <property type="term" value="C:transcription factor TFIIH holo complex"/>
    <property type="evidence" value="ECO:0000303"/>
    <property type="project" value="UniProtKB"/>
</dbReference>
<dbReference type="GO" id="GO:0019899">
    <property type="term" value="F:enzyme binding"/>
    <property type="evidence" value="ECO:0007669"/>
    <property type="project" value="Ensembl"/>
</dbReference>
<dbReference type="GO" id="GO:0030331">
    <property type="term" value="F:nuclear estrogen receptor binding"/>
    <property type="evidence" value="ECO:0000353"/>
    <property type="project" value="UniProtKB"/>
</dbReference>
<dbReference type="GO" id="GO:0030674">
    <property type="term" value="F:protein-macromolecule adaptor activity"/>
    <property type="evidence" value="ECO:0000303"/>
    <property type="project" value="UniProtKB"/>
</dbReference>
<dbReference type="GO" id="GO:0030159">
    <property type="term" value="F:signaling receptor complex adaptor activity"/>
    <property type="evidence" value="ECO:0000303"/>
    <property type="project" value="UniProtKB"/>
</dbReference>
<dbReference type="GO" id="GO:0003713">
    <property type="term" value="F:transcription coactivator activity"/>
    <property type="evidence" value="ECO:0000315"/>
    <property type="project" value="UniProtKB"/>
</dbReference>
<dbReference type="GO" id="GO:0007059">
    <property type="term" value="P:chromosome segregation"/>
    <property type="evidence" value="ECO:0007669"/>
    <property type="project" value="UniProtKB-KW"/>
</dbReference>
<dbReference type="GO" id="GO:0006281">
    <property type="term" value="P:DNA repair"/>
    <property type="evidence" value="ECO:0007669"/>
    <property type="project" value="UniProtKB-KW"/>
</dbReference>
<dbReference type="GO" id="GO:0051604">
    <property type="term" value="P:protein maturation"/>
    <property type="evidence" value="ECO:0000314"/>
    <property type="project" value="UniProtKB"/>
</dbReference>
<dbReference type="FunFam" id="1.25.10.10:FF:000114">
    <property type="entry name" value="MMS19 nucleotide excision repair protein homolog isoform X2"/>
    <property type="match status" value="1"/>
</dbReference>
<dbReference type="Gene3D" id="1.25.10.10">
    <property type="entry name" value="Leucine-rich Repeat Variant"/>
    <property type="match status" value="2"/>
</dbReference>
<dbReference type="InterPro" id="IPR011989">
    <property type="entry name" value="ARM-like"/>
</dbReference>
<dbReference type="InterPro" id="IPR016024">
    <property type="entry name" value="ARM-type_fold"/>
</dbReference>
<dbReference type="InterPro" id="IPR039920">
    <property type="entry name" value="MMS19"/>
</dbReference>
<dbReference type="InterPro" id="IPR024687">
    <property type="entry name" value="MMS19_C"/>
</dbReference>
<dbReference type="InterPro" id="IPR029240">
    <property type="entry name" value="MMS19_N"/>
</dbReference>
<dbReference type="PANTHER" id="PTHR12891">
    <property type="entry name" value="DNA REPAIR/TRANSCRIPTION PROTEIN MET18/MMS19"/>
    <property type="match status" value="1"/>
</dbReference>
<dbReference type="PANTHER" id="PTHR12891:SF0">
    <property type="entry name" value="MMS19 NUCLEOTIDE EXCISION REPAIR PROTEIN HOMOLOG"/>
    <property type="match status" value="1"/>
</dbReference>
<dbReference type="Pfam" id="PF12460">
    <property type="entry name" value="MMS19_C"/>
    <property type="match status" value="1"/>
</dbReference>
<dbReference type="Pfam" id="PF14500">
    <property type="entry name" value="MMS19_N"/>
    <property type="match status" value="1"/>
</dbReference>
<dbReference type="SUPFAM" id="SSF48371">
    <property type="entry name" value="ARM repeat"/>
    <property type="match status" value="1"/>
</dbReference>
<gene>
    <name evidence="18" type="primary">MMS19</name>
    <name type="synonym">MMS19L</name>
</gene>
<evidence type="ECO:0000269" key="1">
    <source>
    </source>
</evidence>
<evidence type="ECO:0000269" key="2">
    <source>
    </source>
</evidence>
<evidence type="ECO:0000269" key="3">
    <source>
    </source>
</evidence>
<evidence type="ECO:0000269" key="4">
    <source>
    </source>
</evidence>
<evidence type="ECO:0000269" key="5">
    <source>
    </source>
</evidence>
<evidence type="ECO:0000269" key="6">
    <source>
    </source>
</evidence>
<evidence type="ECO:0000269" key="7">
    <source>
    </source>
</evidence>
<evidence type="ECO:0000269" key="8">
    <source>
    </source>
</evidence>
<evidence type="ECO:0000269" key="9">
    <source>
    </source>
</evidence>
<evidence type="ECO:0000269" key="10">
    <source>
    </source>
</evidence>
<evidence type="ECO:0000269" key="11">
    <source>
    </source>
</evidence>
<evidence type="ECO:0000269" key="12">
    <source>
    </source>
</evidence>
<evidence type="ECO:0000269" key="13">
    <source ref="5"/>
</evidence>
<evidence type="ECO:0000269" key="14">
    <source ref="7"/>
</evidence>
<evidence type="ECO:0000303" key="15">
    <source>
    </source>
</evidence>
<evidence type="ECO:0000303" key="16">
    <source>
    </source>
</evidence>
<evidence type="ECO:0000305" key="17"/>
<evidence type="ECO:0000312" key="18">
    <source>
        <dbReference type="HGNC" id="HGNC:13824"/>
    </source>
</evidence>
<evidence type="ECO:0007744" key="19">
    <source>
    </source>
</evidence>
<evidence type="ECO:0007744" key="20">
    <source>
    </source>
</evidence>
<evidence type="ECO:0007744" key="21">
    <source>
    </source>
</evidence>
<evidence type="ECO:0007744" key="22">
    <source>
    </source>
</evidence>
<reference key="1">
    <citation type="journal article" date="2000" name="Nucleic Acids Res.">
        <title>Cloning of a human homolog of the yeast nucleotide excision repair gene MMS19 and interaction with transcription repair factor TFIIH via the XPB and XPD helicases.</title>
        <authorList>
            <person name="Seroz T."/>
            <person name="Winkler G.S."/>
            <person name="Auriol J."/>
            <person name="Verhage R.A."/>
            <person name="Vermeulen W."/>
            <person name="Smit B."/>
            <person name="Brouwer J."/>
            <person name="Eker A.P.M."/>
            <person name="Weeda G."/>
            <person name="Egly J.-M."/>
            <person name="Hoeijmakers J.H.J."/>
        </authorList>
    </citation>
    <scope>NUCLEOTIDE SEQUENCE [MRNA] (ISOFORM 1)</scope>
    <scope>VARIANT GLY-68</scope>
    <scope>TISSUE SPECIFICITY</scope>
    <scope>SUBCELLULAR LOCATION</scope>
    <scope>INTERACTION WITH ERCC2 AND ERCC3</scope>
    <source>
        <tissue>Cervix carcinoma</tissue>
    </source>
</reference>
<reference key="2">
    <citation type="journal article" date="2001" name="J. Biol. Chem.">
        <title>The human homologue of the yeast DNA repair and TFIIH regulator MMS19 is an AF-1-specific coactivator of estrogen receptor.</title>
        <authorList>
            <person name="Wu X."/>
            <person name="Li H."/>
            <person name="Chen J.D."/>
        </authorList>
    </citation>
    <scope>NUCLEOTIDE SEQUENCE [MRNA] (ISOFORM 1)</scope>
    <scope>VARIANT GLY-68</scope>
    <scope>INTERACTION WITH NCOA3</scope>
    <scope>SUBCELLULAR LOCATION</scope>
</reference>
<reference key="3">
    <citation type="journal article" date="2001" name="Nucleic Acids Res.">
        <title>Cloning the human and mouse MMS19 genes and functional complementation of a yeast mms19 deletion mutant.</title>
        <authorList>
            <person name="Queimado L."/>
            <person name="Rao M."/>
            <person name="Schultz R.A."/>
            <person name="Koonin E.V."/>
            <person name="Aravind L."/>
            <person name="Nardo T."/>
            <person name="Stefanini M."/>
            <person name="Friedberg E.C."/>
        </authorList>
    </citation>
    <scope>NUCLEOTIDE SEQUENCE [MRNA] (ISOFORM 1)</scope>
    <scope>FUNCTION</scope>
    <scope>SUBCELLULAR LOCATION</scope>
    <scope>TISSUE SPECIFICITY</scope>
    <scope>VARIANT GLY-68</scope>
</reference>
<reference key="4">
    <citation type="journal article" date="2004" name="Nat. Genet.">
        <title>Complete sequencing and characterization of 21,243 full-length human cDNAs.</title>
        <authorList>
            <person name="Ota T."/>
            <person name="Suzuki Y."/>
            <person name="Nishikawa T."/>
            <person name="Otsuki T."/>
            <person name="Sugiyama T."/>
            <person name="Irie R."/>
            <person name="Wakamatsu A."/>
            <person name="Hayashi K."/>
            <person name="Sato H."/>
            <person name="Nagai K."/>
            <person name="Kimura K."/>
            <person name="Makita H."/>
            <person name="Sekine M."/>
            <person name="Obayashi M."/>
            <person name="Nishi T."/>
            <person name="Shibahara T."/>
            <person name="Tanaka T."/>
            <person name="Ishii S."/>
            <person name="Yamamoto J."/>
            <person name="Saito K."/>
            <person name="Kawai Y."/>
            <person name="Isono Y."/>
            <person name="Nakamura Y."/>
            <person name="Nagahari K."/>
            <person name="Murakami K."/>
            <person name="Yasuda T."/>
            <person name="Iwayanagi T."/>
            <person name="Wagatsuma M."/>
            <person name="Shiratori A."/>
            <person name="Sudo H."/>
            <person name="Hosoiri T."/>
            <person name="Kaku Y."/>
            <person name="Kodaira H."/>
            <person name="Kondo H."/>
            <person name="Sugawara M."/>
            <person name="Takahashi M."/>
            <person name="Kanda K."/>
            <person name="Yokoi T."/>
            <person name="Furuya T."/>
            <person name="Kikkawa E."/>
            <person name="Omura Y."/>
            <person name="Abe K."/>
            <person name="Kamihara K."/>
            <person name="Katsuta N."/>
            <person name="Sato K."/>
            <person name="Tanikawa M."/>
            <person name="Yamazaki M."/>
            <person name="Ninomiya K."/>
            <person name="Ishibashi T."/>
            <person name="Yamashita H."/>
            <person name="Murakawa K."/>
            <person name="Fujimori K."/>
            <person name="Tanai H."/>
            <person name="Kimata M."/>
            <person name="Watanabe M."/>
            <person name="Hiraoka S."/>
            <person name="Chiba Y."/>
            <person name="Ishida S."/>
            <person name="Ono Y."/>
            <person name="Takiguchi S."/>
            <person name="Watanabe S."/>
            <person name="Yosida M."/>
            <person name="Hotuta T."/>
            <person name="Kusano J."/>
            <person name="Kanehori K."/>
            <person name="Takahashi-Fujii A."/>
            <person name="Hara H."/>
            <person name="Tanase T.-O."/>
            <person name="Nomura Y."/>
            <person name="Togiya S."/>
            <person name="Komai F."/>
            <person name="Hara R."/>
            <person name="Takeuchi K."/>
            <person name="Arita M."/>
            <person name="Imose N."/>
            <person name="Musashino K."/>
            <person name="Yuuki H."/>
            <person name="Oshima A."/>
            <person name="Sasaki N."/>
            <person name="Aotsuka S."/>
            <person name="Yoshikawa Y."/>
            <person name="Matsunawa H."/>
            <person name="Ichihara T."/>
            <person name="Shiohata N."/>
            <person name="Sano S."/>
            <person name="Moriya S."/>
            <person name="Momiyama H."/>
            <person name="Satoh N."/>
            <person name="Takami S."/>
            <person name="Terashima Y."/>
            <person name="Suzuki O."/>
            <person name="Nakagawa S."/>
            <person name="Senoh A."/>
            <person name="Mizoguchi H."/>
            <person name="Goto Y."/>
            <person name="Shimizu F."/>
            <person name="Wakebe H."/>
            <person name="Hishigaki H."/>
            <person name="Watanabe T."/>
            <person name="Sugiyama A."/>
            <person name="Takemoto M."/>
            <person name="Kawakami B."/>
            <person name="Yamazaki M."/>
            <person name="Watanabe K."/>
            <person name="Kumagai A."/>
            <person name="Itakura S."/>
            <person name="Fukuzumi Y."/>
            <person name="Fujimori Y."/>
            <person name="Komiyama M."/>
            <person name="Tashiro H."/>
            <person name="Tanigami A."/>
            <person name="Fujiwara T."/>
            <person name="Ono T."/>
            <person name="Yamada K."/>
            <person name="Fujii Y."/>
            <person name="Ozaki K."/>
            <person name="Hirao M."/>
            <person name="Ohmori Y."/>
            <person name="Kawabata A."/>
            <person name="Hikiji T."/>
            <person name="Kobatake N."/>
            <person name="Inagaki H."/>
            <person name="Ikema Y."/>
            <person name="Okamoto S."/>
            <person name="Okitani R."/>
            <person name="Kawakami T."/>
            <person name="Noguchi S."/>
            <person name="Itoh T."/>
            <person name="Shigeta K."/>
            <person name="Senba T."/>
            <person name="Matsumura K."/>
            <person name="Nakajima Y."/>
            <person name="Mizuno T."/>
            <person name="Morinaga M."/>
            <person name="Sasaki M."/>
            <person name="Togashi T."/>
            <person name="Oyama M."/>
            <person name="Hata H."/>
            <person name="Watanabe M."/>
            <person name="Komatsu T."/>
            <person name="Mizushima-Sugano J."/>
            <person name="Satoh T."/>
            <person name="Shirai Y."/>
            <person name="Takahashi Y."/>
            <person name="Nakagawa K."/>
            <person name="Okumura K."/>
            <person name="Nagase T."/>
            <person name="Nomura N."/>
            <person name="Kikuchi H."/>
            <person name="Masuho Y."/>
            <person name="Yamashita R."/>
            <person name="Nakai K."/>
            <person name="Yada T."/>
            <person name="Nakamura Y."/>
            <person name="Ohara O."/>
            <person name="Isogai T."/>
            <person name="Sugano S."/>
        </authorList>
    </citation>
    <scope>NUCLEOTIDE SEQUENCE [LARGE SCALE MRNA] (ISOFORMS 5 AND 6)</scope>
    <scope>NUCLEOTIDE SEQUENCE [LARGE SCALE MRNA] OF 48-1030 (ISOFORM 4)</scope>
    <scope>NUCLEOTIDE SEQUENCE [LARGE SCALE MRNA] OF 127-1030 (ISOFORM 2)</scope>
    <scope>VARIANTS GLY-68 AND ASP-790</scope>
    <source>
        <tissue>Teratocarcinoma</tissue>
        <tissue>Tongue</tissue>
        <tissue>Trachea</tissue>
    </source>
</reference>
<reference key="5">
    <citation type="submission" date="2005-03" db="EMBL/GenBank/DDBJ databases">
        <authorList>
            <consortium name="NIEHS SNPs program"/>
        </authorList>
    </citation>
    <scope>NUCLEOTIDE SEQUENCE [GENOMIC DNA]</scope>
    <scope>VARIANTS GLY-68; TRP-98; ILE-197; HIS-306; VAL-365; PRO-409; GLU-434; ILE-526; VAL-558; ASP-790 AND HIS-983</scope>
</reference>
<reference key="6">
    <citation type="journal article" date="2004" name="Nature">
        <title>The DNA sequence and comparative analysis of human chromosome 10.</title>
        <authorList>
            <person name="Deloukas P."/>
            <person name="Earthrowl M.E."/>
            <person name="Grafham D.V."/>
            <person name="Rubenfield M."/>
            <person name="French L."/>
            <person name="Steward C.A."/>
            <person name="Sims S.K."/>
            <person name="Jones M.C."/>
            <person name="Searle S."/>
            <person name="Scott C."/>
            <person name="Howe K."/>
            <person name="Hunt S.E."/>
            <person name="Andrews T.D."/>
            <person name="Gilbert J.G.R."/>
            <person name="Swarbreck D."/>
            <person name="Ashurst J.L."/>
            <person name="Taylor A."/>
            <person name="Battles J."/>
            <person name="Bird C.P."/>
            <person name="Ainscough R."/>
            <person name="Almeida J.P."/>
            <person name="Ashwell R.I.S."/>
            <person name="Ambrose K.D."/>
            <person name="Babbage A.K."/>
            <person name="Bagguley C.L."/>
            <person name="Bailey J."/>
            <person name="Banerjee R."/>
            <person name="Bates K."/>
            <person name="Beasley H."/>
            <person name="Bray-Allen S."/>
            <person name="Brown A.J."/>
            <person name="Brown J.Y."/>
            <person name="Burford D.C."/>
            <person name="Burrill W."/>
            <person name="Burton J."/>
            <person name="Cahill P."/>
            <person name="Camire D."/>
            <person name="Carter N.P."/>
            <person name="Chapman J.C."/>
            <person name="Clark S.Y."/>
            <person name="Clarke G."/>
            <person name="Clee C.M."/>
            <person name="Clegg S."/>
            <person name="Corby N."/>
            <person name="Coulson A."/>
            <person name="Dhami P."/>
            <person name="Dutta I."/>
            <person name="Dunn M."/>
            <person name="Faulkner L."/>
            <person name="Frankish A."/>
            <person name="Frankland J.A."/>
            <person name="Garner P."/>
            <person name="Garnett J."/>
            <person name="Gribble S."/>
            <person name="Griffiths C."/>
            <person name="Grocock R."/>
            <person name="Gustafson E."/>
            <person name="Hammond S."/>
            <person name="Harley J.L."/>
            <person name="Hart E."/>
            <person name="Heath P.D."/>
            <person name="Ho T.P."/>
            <person name="Hopkins B."/>
            <person name="Horne J."/>
            <person name="Howden P.J."/>
            <person name="Huckle E."/>
            <person name="Hynds C."/>
            <person name="Johnson C."/>
            <person name="Johnson D."/>
            <person name="Kana A."/>
            <person name="Kay M."/>
            <person name="Kimberley A.M."/>
            <person name="Kershaw J.K."/>
            <person name="Kokkinaki M."/>
            <person name="Laird G.K."/>
            <person name="Lawlor S."/>
            <person name="Lee H.M."/>
            <person name="Leongamornlert D.A."/>
            <person name="Laird G."/>
            <person name="Lloyd C."/>
            <person name="Lloyd D.M."/>
            <person name="Loveland J."/>
            <person name="Lovell J."/>
            <person name="McLaren S."/>
            <person name="McLay K.E."/>
            <person name="McMurray A."/>
            <person name="Mashreghi-Mohammadi M."/>
            <person name="Matthews L."/>
            <person name="Milne S."/>
            <person name="Nickerson T."/>
            <person name="Nguyen M."/>
            <person name="Overton-Larty E."/>
            <person name="Palmer S.A."/>
            <person name="Pearce A.V."/>
            <person name="Peck A.I."/>
            <person name="Pelan S."/>
            <person name="Phillimore B."/>
            <person name="Porter K."/>
            <person name="Rice C.M."/>
            <person name="Rogosin A."/>
            <person name="Ross M.T."/>
            <person name="Sarafidou T."/>
            <person name="Sehra H.K."/>
            <person name="Shownkeen R."/>
            <person name="Skuce C.D."/>
            <person name="Smith M."/>
            <person name="Standring L."/>
            <person name="Sycamore N."/>
            <person name="Tester J."/>
            <person name="Thorpe A."/>
            <person name="Torcasso W."/>
            <person name="Tracey A."/>
            <person name="Tromans A."/>
            <person name="Tsolas J."/>
            <person name="Wall M."/>
            <person name="Walsh J."/>
            <person name="Wang H."/>
            <person name="Weinstock K."/>
            <person name="West A.P."/>
            <person name="Willey D.L."/>
            <person name="Whitehead S.L."/>
            <person name="Wilming L."/>
            <person name="Wray P.W."/>
            <person name="Young L."/>
            <person name="Chen Y."/>
            <person name="Lovering R.C."/>
            <person name="Moschonas N.K."/>
            <person name="Siebert R."/>
            <person name="Fechtel K."/>
            <person name="Bentley D."/>
            <person name="Durbin R.M."/>
            <person name="Hubbard T."/>
            <person name="Doucette-Stamm L."/>
            <person name="Beck S."/>
            <person name="Smith D.R."/>
            <person name="Rogers J."/>
        </authorList>
    </citation>
    <scope>NUCLEOTIDE SEQUENCE [LARGE SCALE GENOMIC DNA]</scope>
</reference>
<reference key="7">
    <citation type="submission" date="2005-09" db="EMBL/GenBank/DDBJ databases">
        <authorList>
            <person name="Mural R.J."/>
            <person name="Istrail S."/>
            <person name="Sutton G.G."/>
            <person name="Florea L."/>
            <person name="Halpern A.L."/>
            <person name="Mobarry C.M."/>
            <person name="Lippert R."/>
            <person name="Walenz B."/>
            <person name="Shatkay H."/>
            <person name="Dew I."/>
            <person name="Miller J.R."/>
            <person name="Flanigan M.J."/>
            <person name="Edwards N.J."/>
            <person name="Bolanos R."/>
            <person name="Fasulo D."/>
            <person name="Halldorsson B.V."/>
            <person name="Hannenhalli S."/>
            <person name="Turner R."/>
            <person name="Yooseph S."/>
            <person name="Lu F."/>
            <person name="Nusskern D.R."/>
            <person name="Shue B.C."/>
            <person name="Zheng X.H."/>
            <person name="Zhong F."/>
            <person name="Delcher A.L."/>
            <person name="Huson D.H."/>
            <person name="Kravitz S.A."/>
            <person name="Mouchard L."/>
            <person name="Reinert K."/>
            <person name="Remington K.A."/>
            <person name="Clark A.G."/>
            <person name="Waterman M.S."/>
            <person name="Eichler E.E."/>
            <person name="Adams M.D."/>
            <person name="Hunkapiller M.W."/>
            <person name="Myers E.W."/>
            <person name="Venter J.C."/>
        </authorList>
    </citation>
    <scope>NUCLEOTIDE SEQUENCE [LARGE SCALE GENOMIC DNA]</scope>
    <scope>VARIANT GLY-68</scope>
</reference>
<reference key="8">
    <citation type="journal article" date="2004" name="Genome Res.">
        <title>The status, quality, and expansion of the NIH full-length cDNA project: the Mammalian Gene Collection (MGC).</title>
        <authorList>
            <consortium name="The MGC Project Team"/>
        </authorList>
    </citation>
    <scope>NUCLEOTIDE SEQUENCE [LARGE SCALE MRNA] (ISOFORMS 1 AND 3)</scope>
    <scope>VARIANTS GLY-68 AND ASP-790</scope>
    <source>
        <tissue>Brain</tissue>
        <tissue>Lymph</tissue>
        <tissue>Uterus</tissue>
    </source>
</reference>
<reference key="9">
    <citation type="journal article" date="2009" name="Anal. Chem.">
        <title>Lys-N and trypsin cover complementary parts of the phosphoproteome in a refined SCX-based approach.</title>
        <authorList>
            <person name="Gauci S."/>
            <person name="Helbig A.O."/>
            <person name="Slijper M."/>
            <person name="Krijgsveld J."/>
            <person name="Heck A.J."/>
            <person name="Mohammed S."/>
        </authorList>
    </citation>
    <scope>ACETYLATION [LARGE SCALE ANALYSIS] AT ALA-2</scope>
    <scope>CLEAVAGE OF INITIATOR METHIONINE [LARGE SCALE ANALYSIS]</scope>
    <scope>IDENTIFICATION BY MASS SPECTROMETRY [LARGE SCALE ANALYSIS]</scope>
</reference>
<reference key="10">
    <citation type="journal article" date="2009" name="Science">
        <title>Lysine acetylation targets protein complexes and co-regulates major cellular functions.</title>
        <authorList>
            <person name="Choudhary C."/>
            <person name="Kumar C."/>
            <person name="Gnad F."/>
            <person name="Nielsen M.L."/>
            <person name="Rehman M."/>
            <person name="Walther T.C."/>
            <person name="Olsen J.V."/>
            <person name="Mann M."/>
        </authorList>
    </citation>
    <scope>ACETYLATION [LARGE SCALE ANALYSIS] AT LYS-496</scope>
    <scope>IDENTIFICATION BY MASS SPECTROMETRY [LARGE SCALE ANALYSIS]</scope>
</reference>
<reference key="11">
    <citation type="journal article" date="2010" name="Mol. Cell">
        <title>MMXD, a TFIIH-independent XPD-MMS19 protein complex involved in chromosome segregation.</title>
        <authorList>
            <person name="Ito S."/>
            <person name="Tan L.J."/>
            <person name="Andoh D."/>
            <person name="Narita T."/>
            <person name="Seki M."/>
            <person name="Hirano Y."/>
            <person name="Narita K."/>
            <person name="Kuraoka I."/>
            <person name="Hiraoka Y."/>
            <person name="Tanaka K."/>
        </authorList>
    </citation>
    <scope>FUNCTION</scope>
    <scope>IDENTIFICATION IN MMXD COMPLEX</scope>
    <scope>INTERACTION WITH CIAO2B</scope>
    <scope>SUBCELLULAR LOCATION</scope>
</reference>
<reference key="12">
    <citation type="journal article" date="2010" name="Sci. Signal.">
        <title>Quantitative phosphoproteomics reveals widespread full phosphorylation site occupancy during mitosis.</title>
        <authorList>
            <person name="Olsen J.V."/>
            <person name="Vermeulen M."/>
            <person name="Santamaria A."/>
            <person name="Kumar C."/>
            <person name="Miller M.L."/>
            <person name="Jensen L.J."/>
            <person name="Gnad F."/>
            <person name="Cox J."/>
            <person name="Jensen T.S."/>
            <person name="Nigg E.A."/>
            <person name="Brunak S."/>
            <person name="Mann M."/>
        </authorList>
    </citation>
    <scope>PHOSPHORYLATION [LARGE SCALE ANALYSIS] AT SER-1027</scope>
    <scope>IDENTIFICATION BY MASS SPECTROMETRY [LARGE SCALE ANALYSIS]</scope>
    <source>
        <tissue>Cervix carcinoma</tissue>
    </source>
</reference>
<reference key="13">
    <citation type="journal article" date="2011" name="BMC Syst. Biol.">
        <title>Initial characterization of the human central proteome.</title>
        <authorList>
            <person name="Burkard T.R."/>
            <person name="Planyavsky M."/>
            <person name="Kaupe I."/>
            <person name="Breitwieser F.P."/>
            <person name="Buerckstuemmer T."/>
            <person name="Bennett K.L."/>
            <person name="Superti-Furga G."/>
            <person name="Colinge J."/>
        </authorList>
    </citation>
    <scope>IDENTIFICATION BY MASS SPECTROMETRY [LARGE SCALE ANALYSIS]</scope>
</reference>
<reference key="14">
    <citation type="journal article" date="2012" name="Science">
        <title>MMS19 assembles iron-sulfur proteins required for DNA metabolism and genomic integrity.</title>
        <authorList>
            <person name="Stehling O."/>
            <person name="Vashisht A.A."/>
            <person name="Mascarenhas J."/>
            <person name="Jonsson Z.O."/>
            <person name="Sharma T."/>
            <person name="Netz D.J."/>
            <person name="Pierik A.J."/>
            <person name="Wohlschlegel J.A."/>
            <person name="Lill R."/>
        </authorList>
    </citation>
    <scope>FUNCTION</scope>
    <scope>IDENTIFICATION IN THE CIA COMPLEX</scope>
</reference>
<reference key="15">
    <citation type="journal article" date="2012" name="Science">
        <title>MMS19 links cytoplasmic iron-sulfur cluster assembly to DNA metabolism.</title>
        <authorList>
            <person name="Gari K."/>
            <person name="Leon Ortiz A.M."/>
            <person name="Borel V."/>
            <person name="Flynn H."/>
            <person name="Skehel J.M."/>
            <person name="Boulton S.J."/>
        </authorList>
    </citation>
    <scope>FUNCTION</scope>
    <scope>IDENTIFICATION IN THE CIA COMPLEX</scope>
    <scope>SUBCELLULAR LOCATION</scope>
    <scope>INTERACTION WITH RTEL1</scope>
</reference>
<reference key="16">
    <citation type="journal article" date="2013" name="J. Biol. Chem.">
        <title>IOP1 protein is an external component of the human cytosolic iron-sulfur cluster assembly (CIA) machinery and functions in the MMS19 protein-dependent CIA pathway.</title>
        <authorList>
            <person name="Seki M."/>
            <person name="Takeda Y."/>
            <person name="Iwai K."/>
            <person name="Tanaka K."/>
        </authorList>
    </citation>
    <scope>FUNCTION</scope>
    <scope>IDENTIFICATION IN THE CIA COMPLEX</scope>
    <scope>SUBCELLULAR LOCATION</scope>
    <scope>INTERACTION WITH BRIP1; CIAO2B; CIAO3; ERCC2 AND RTEL1</scope>
</reference>
<reference key="17">
    <citation type="journal article" date="2015" name="Proteomics">
        <title>N-terminome analysis of the human mitochondrial proteome.</title>
        <authorList>
            <person name="Vaca Jacome A.S."/>
            <person name="Rabilloud T."/>
            <person name="Schaeffer-Reiss C."/>
            <person name="Rompais M."/>
            <person name="Ayoub D."/>
            <person name="Lane L."/>
            <person name="Bairoch A."/>
            <person name="Van Dorsselaer A."/>
            <person name="Carapito C."/>
        </authorList>
    </citation>
    <scope>ACETYLATION [LARGE SCALE ANALYSIS] AT ALA-2</scope>
    <scope>CLEAVAGE OF INITIATOR METHIONINE [LARGE SCALE ANALYSIS]</scope>
    <scope>IDENTIFICATION BY MASS SPECTROMETRY [LARGE SCALE ANALYSIS]</scope>
</reference>
<reference key="18">
    <citation type="journal article" date="2018" name="J. Cell Sci.">
        <title>Fe-S cluster coordination of the chromokinesin KIF4A alters its subcellular localization during mitosis.</title>
        <authorList>
            <person name="Ben-Shimon L."/>
            <person name="Paul V.D."/>
            <person name="David-Kadoch G."/>
            <person name="Volpe M."/>
            <person name="Stuempfig M."/>
            <person name="Bill E."/>
            <person name="Muehlenhoff U."/>
            <person name="Lill R."/>
            <person name="Ben-Aroya S."/>
        </authorList>
    </citation>
    <scope>FUNCTION</scope>
    <scope>INTERACTION WITH KIF4A</scope>
    <scope>SUBCELLULAR LOCATION</scope>
</reference>
<reference key="19">
    <citation type="journal article" date="2018" name="Mol. Cell">
        <title>Cytosolic Iron-Sulfur Assembly Is Evolutionarily Tuned by a Cancer-Amplified Ubiquitin Ligase.</title>
        <authorList>
            <person name="Weon J.L."/>
            <person name="Yang S.W."/>
            <person name="Potts P.R."/>
        </authorList>
    </citation>
    <scope>FUNCTION</scope>
    <scope>UBIQUITINATION</scope>
    <scope>MUTAGENESIS OF LYS-993; LYS-1002; 1007-LYS-LYS-1008 AND LYS-1013</scope>
</reference>
<reference key="20">
    <citation type="journal article" date="2019" name="Sci. Rep.">
        <title>Nkx2-5 Second Heart Field Target Gene Ccdc117 Regulates DNA Metabolism and Proliferation.</title>
        <authorList>
            <person name="Horton A.J."/>
            <person name="Brooker J."/>
            <person name="Streitfeld W.S."/>
            <person name="Flessa M.E."/>
            <person name="Pillai B."/>
            <person name="Simpson R."/>
            <person name="Clark C.D."/>
            <person name="Gooz M.B."/>
            <person name="Sutton K.K."/>
            <person name="Foley A.C."/>
            <person name="Lee K.H."/>
        </authorList>
    </citation>
    <scope>INTERACTION WITH CCDC117</scope>
</reference>
<protein>
    <recommendedName>
        <fullName evidence="17">MMS19 nucleotide excision repair protein homolog</fullName>
        <shortName>hMMS19</shortName>
    </recommendedName>
    <alternativeName>
        <fullName>MET18 homolog</fullName>
    </alternativeName>
    <alternativeName>
        <fullName>MMS19-like protein</fullName>
    </alternativeName>
</protein>
<keyword id="KW-0007">Acetylation</keyword>
<keyword id="KW-0010">Activator</keyword>
<keyword id="KW-0025">Alternative splicing</keyword>
<keyword id="KW-0159">Chromosome partition</keyword>
<keyword id="KW-0963">Cytoplasm</keyword>
<keyword id="KW-0206">Cytoskeleton</keyword>
<keyword id="KW-0227">DNA damage</keyword>
<keyword id="KW-0234">DNA repair</keyword>
<keyword id="KW-0539">Nucleus</keyword>
<keyword id="KW-0597">Phosphoprotein</keyword>
<keyword id="KW-1267">Proteomics identification</keyword>
<keyword id="KW-1185">Reference proteome</keyword>
<keyword id="KW-0677">Repeat</keyword>
<keyword id="KW-0804">Transcription</keyword>
<keyword id="KW-0805">Transcription regulation</keyword>
<keyword id="KW-0832">Ubl conjugation</keyword>
<comment type="function">
    <text evidence="2 6 7 8 9 10 11">Key component of the cytosolic iron-sulfur protein assembly (CIA) complex, a multiprotein complex that mediates the incorporation of iron-sulfur cluster into apoproteins specifically involved in DNA metabolism and genomic integrity (PubMed:29848660). In the CIA complex, MMS19 acts as an adapter between early-acting CIA components and a subset of cellular target iron-sulfur proteins such as ERCC2/XPD, FANCJ and RTEL1, thereby playing a key role in nucleotide excision repair (NER), homologous recombination-mediated double-strand break DNA repair, DNA replication and RNA polymerase II (POL II) transcription (PubMed:22678361, PubMed:22678362, PubMed:23585563, PubMed:29225034). As part of the mitotic spindle-associated MMXD complex, plays a role in chromosome segregation, probably by facilitating iron-sulfur (Fe-S) cluster assembly into ERCC2/XPD (PubMed:20797633). Together with CIAO2, facilitates the transfer of Fe-S clusters to the motor protein KIF4A, which ensures proper localization of KIF4A to mitotic machinery components to promote the progression of mitosis (PubMed:29848660). Indirectly acts as a transcriptional coactivator of estrogen receptor (ER), via its role in iron-sulfur insertion into some component of the TFIIH-machinery (PubMed:11279242).</text>
</comment>
<comment type="subunit">
    <text evidence="1 2 6 7 8 9 11 12">Component of the CIA complex (PubMed:22678361, PubMed:22678362, PubMed:23585563). In the CIA complex, interacts directly with CIAO2B and CIAO3 (PubMed:23585563). Component of the MMXD complex, composed of CIAO1, ERCC2, CIAO2B, MMS19 and SLC25A5 (PubMed:20797633). Interacts with CIAO2B; the interaction is direct (PubMed:20797633). Interacts with ERCC2/XPD; the interaction is direct (PubMed:11071939, PubMed:23585563). Interacts with ERCC3/XPB and NCOA3/RAC3 (PubMed:11071939, PubMed:11279242). Interacts with RTEL1; the interaction mediates the association of RTEL1 with the CIA complex (PubMed:22678361, PubMed:23585563). Interacts with BRIP1 (PubMed:23585563). Interacts with KIF4A; the interaction facilitates the transfer of Fe-S clusters to KIF4A to ensure proper localization of KIF4A to the mitotic machinery components (PubMed:29848660). Interacts with CCDC117; the interaction is indirect (PubMed:30742009).</text>
</comment>
<comment type="interaction">
    <interactant intactId="EBI-1044169">
        <id>Q96T76</id>
    </interactant>
    <interactant intactId="EBI-3509650">
        <id>Q9BX63</id>
        <label>BRIP1</label>
    </interactant>
    <organismsDiffer>false</organismsDiffer>
    <experiments>4</experiments>
</comment>
<comment type="interaction">
    <interactant intactId="EBI-1044169">
        <id>Q96T76</id>
    </interactant>
    <interactant intactId="EBI-725145">
        <id>O76071</id>
        <label>CIAO1</label>
    </interactant>
    <organismsDiffer>false</organismsDiffer>
    <experiments>15</experiments>
</comment>
<comment type="interaction">
    <interactant intactId="EBI-1044169">
        <id>Q96T76</id>
    </interactant>
    <interactant intactId="EBI-744045">
        <id>Q9Y3D0</id>
        <label>CIAO2B</label>
    </interactant>
    <organismsDiffer>false</organismsDiffer>
    <experiments>17</experiments>
</comment>
<comment type="interaction">
    <interactant intactId="EBI-1044169">
        <id>Q96T76</id>
    </interactant>
    <interactant intactId="EBI-10977788">
        <id>Q9H6Q4</id>
        <label>CIAO3</label>
    </interactant>
    <organismsDiffer>false</organismsDiffer>
    <experiments>3</experiments>
</comment>
<comment type="interaction">
    <interactant intactId="EBI-1044169">
        <id>Q96T76</id>
    </interactant>
    <interactant intactId="EBI-6380590">
        <id>P18074</id>
        <label>ERCC2</label>
    </interactant>
    <organismsDiffer>false</organismsDiffer>
    <experiments>9</experiments>
</comment>
<comment type="interaction">
    <interactant intactId="EBI-1044169">
        <id>Q96T76</id>
    </interactant>
    <interactant intactId="EBI-2859587">
        <id>Q9NZ71</id>
        <label>RTEL1</label>
    </interactant>
    <organismsDiffer>false</organismsDiffer>
    <experiments>4</experiments>
</comment>
<comment type="interaction">
    <interactant intactId="EBI-10190644">
        <id>Q96T76-8</id>
    </interactant>
    <interactant intactId="EBI-725145">
        <id>O76071</id>
        <label>CIAO1</label>
    </interactant>
    <organismsDiffer>false</organismsDiffer>
    <experiments>5</experiments>
</comment>
<comment type="subcellular location">
    <subcellularLocation>
        <location evidence="6">Nucleus</location>
    </subcellularLocation>
    <subcellularLocation>
        <location evidence="6 11">Cytoplasm</location>
        <location evidence="6 11">Cytoskeleton</location>
        <location evidence="6 11">Spindle</location>
    </subcellularLocation>
    <subcellularLocation>
        <location evidence="11">Cytoplasm</location>
        <location evidence="11">Cytoskeleton</location>
        <location evidence="11">Microtubule organizing center</location>
        <location evidence="11">Centrosome</location>
    </subcellularLocation>
    <text evidence="11">In mitosis, enriched on centrosomes during prophase, localizes to the spindle during metaphase and surrounds compacted spindle midzone microtubules during telophase.</text>
</comment>
<comment type="alternative products">
    <event type="alternative splicing"/>
    <isoform>
        <id>Q96T76-1</id>
        <name>1</name>
        <sequence type="displayed"/>
    </isoform>
    <isoform>
        <id>Q96T76-7</id>
        <name>2</name>
        <sequence type="described" ref="VSP_040312 VSP_040313"/>
    </isoform>
    <isoform>
        <id>Q96T76-6</id>
        <name>3</name>
        <sequence type="described" ref="VSP_040310 VSP_040311"/>
    </isoform>
    <isoform>
        <id>Q96T76-5</id>
        <name>4</name>
        <sequence type="described" ref="VSP_015565"/>
    </isoform>
    <isoform>
        <id>Q96T76-8</id>
        <name>5</name>
        <sequence type="described" ref="VSP_044182"/>
    </isoform>
    <isoform>
        <id>Q96T76-9</id>
        <name>6</name>
        <sequence type="described" ref="VSP_044183"/>
    </isoform>
</comment>
<comment type="tissue specificity">
    <text evidence="1 3">Ubiquitously expressed with higher expression in testis.</text>
</comment>
<comment type="PTM">
    <text evidence="10">Ubiquitinated; undergoes 'Lys-48'-linked polyubiquitination by MAGEF1-NSMCE1 ubiquitin ligase complex leading to proteasomal degradation.</text>
</comment>
<comment type="miscellaneous">
    <molecule>Isoform 2</molecule>
    <text evidence="17">May be produced at very low levels due to a premature stop codon in the mRNA, leading to nonsense-mediated mRNA decay.</text>
</comment>
<comment type="miscellaneous">
    <molecule>Isoform 3</molecule>
    <text evidence="17">May be produced at very low levels due to a premature stop codon in the mRNA, leading to nonsense-mediated mRNA decay.</text>
</comment>
<comment type="similarity">
    <text evidence="17">Belongs to the MET18/MMS19 family.</text>
</comment>
<comment type="sequence caution" evidence="17">
    <conflict type="erroneous translation">
        <sequence resource="EMBL-CDS" id="AAH80532"/>
    </conflict>
    <text>Wrong choice of CDS.</text>
</comment>
<comment type="sequence caution" evidence="17">
    <conflict type="erroneous initiation">
        <sequence resource="EMBL-CDS" id="BAB55315"/>
    </conflict>
    <text>Truncated N-terminus.</text>
</comment>
<comment type="sequence caution" evidence="17">
    <conflict type="erroneous translation">
        <sequence resource="EMBL-CDS" id="BAB71223"/>
    </conflict>
    <text>Wrong choice of CDS.</text>
</comment>
<comment type="sequence caution" evidence="17">
    <conflict type="erroneous initiation">
        <sequence resource="EMBL-CDS" id="BAG51657"/>
    </conflict>
    <text>Truncated N-terminus.</text>
</comment>
<comment type="sequence caution" evidence="17">
    <conflict type="frameshift">
        <sequence resource="EMBL-CDS" id="CAC29239"/>
    </conflict>
</comment>
<feature type="initiator methionine" description="Removed" evidence="19 22">
    <location>
        <position position="1"/>
    </location>
</feature>
<feature type="chain" id="PRO_0000096514" description="MMS19 nucleotide excision repair protein homolog">
    <location>
        <begin position="2"/>
        <end position="1030"/>
    </location>
</feature>
<feature type="repeat" description="HEAT 1">
    <location>
        <begin position="866"/>
        <end position="904"/>
    </location>
</feature>
<feature type="repeat" description="HEAT 2">
    <location>
        <begin position="908"/>
        <end position="946"/>
    </location>
</feature>
<feature type="repeat" description="HEAT 3">
    <location>
        <begin position="949"/>
        <end position="987"/>
    </location>
</feature>
<feature type="repeat" description="HEAT 4">
    <location>
        <begin position="990"/>
        <end position="1028"/>
    </location>
</feature>
<feature type="modified residue" description="N-acetylalanine" evidence="19 22">
    <location>
        <position position="2"/>
    </location>
</feature>
<feature type="modified residue" description="N6-acetyllysine" evidence="20">
    <location>
        <position position="496"/>
    </location>
</feature>
<feature type="modified residue" description="Phosphoserine" evidence="21">
    <location>
        <position position="1027"/>
    </location>
</feature>
<feature type="splice variant" id="VSP_044182" description="In isoform 5." evidence="15">
    <original>M</original>
    <variation>MRGEPVSSHRPYPLPRSLVRVM</variation>
    <location>
        <position position="1"/>
    </location>
</feature>
<feature type="splice variant" id="VSP_040310" description="In isoform 3." evidence="16">
    <original>DVK</original>
    <variation>GPL</variation>
    <location>
        <begin position="38"/>
        <end position="40"/>
    </location>
</feature>
<feature type="splice variant" id="VSP_040311" description="In isoform 3." evidence="16">
    <location>
        <begin position="41"/>
        <end position="1030"/>
    </location>
</feature>
<feature type="splice variant" id="VSP_044183" description="In isoform 6." evidence="15">
    <location>
        <begin position="165"/>
        <end position="207"/>
    </location>
</feature>
<feature type="splice variant" id="VSP_015565" description="In isoform 4." evidence="15">
    <location>
        <begin position="309"/>
        <end position="406"/>
    </location>
</feature>
<feature type="splice variant" id="VSP_040312" description="In isoform 2." evidence="15">
    <original>VFQTASERVE</original>
    <variation>TAGTTCVNRT</variation>
    <location>
        <begin position="309"/>
        <end position="318"/>
    </location>
</feature>
<feature type="splice variant" id="VSP_040313" description="In isoform 2." evidence="15">
    <location>
        <begin position="319"/>
        <end position="1030"/>
    </location>
</feature>
<feature type="sequence variant" id="VAR_023448" description="In dbSNP:rs2275586." evidence="1 2 3 4 5 13 14">
    <original>A</original>
    <variation>G</variation>
    <location>
        <position position="68"/>
    </location>
</feature>
<feature type="sequence variant" id="VAR_023449" description="In dbSNP:rs29001280." evidence="13">
    <original>R</original>
    <variation>W</variation>
    <location>
        <position position="98"/>
    </location>
</feature>
<feature type="sequence variant" id="VAR_023450" description="In dbSNP:rs29001285." evidence="13">
    <original>V</original>
    <variation>I</variation>
    <location>
        <position position="197"/>
    </location>
</feature>
<feature type="sequence variant" id="VAR_023451" description="In dbSNP:rs29001306." evidence="13">
    <original>R</original>
    <variation>H</variation>
    <location>
        <position position="306"/>
    </location>
</feature>
<feature type="sequence variant" id="VAR_023452" description="In dbSNP:rs29001309." evidence="13">
    <original>M</original>
    <variation>V</variation>
    <location>
        <position position="365"/>
    </location>
</feature>
<feature type="sequence variant" id="VAR_023453" description="In dbSNP:rs29001311." evidence="13">
    <original>Q</original>
    <variation>P</variation>
    <location>
        <position position="409"/>
    </location>
</feature>
<feature type="sequence variant" id="VAR_023454" description="In dbSNP:rs29001314." evidence="13">
    <original>Q</original>
    <variation>E</variation>
    <location>
        <position position="434"/>
    </location>
</feature>
<feature type="sequence variant" id="VAR_023455" description="In dbSNP:rs17112809." evidence="13">
    <original>V</original>
    <variation>I</variation>
    <location>
        <position position="526"/>
    </location>
</feature>
<feature type="sequence variant" id="VAR_023456" description="In dbSNP:rs12360068." evidence="13">
    <original>A</original>
    <variation>V</variation>
    <location>
        <position position="558"/>
    </location>
</feature>
<feature type="sequence variant" id="VAR_023457" description="In dbSNP:rs3740526." evidence="4 5 13">
    <original>G</original>
    <variation>D</variation>
    <location>
        <position position="790"/>
    </location>
</feature>
<feature type="sequence variant" id="VAR_023458" description="In dbSNP:rs29001332." evidence="13">
    <original>R</original>
    <variation>H</variation>
    <location>
        <position position="983"/>
    </location>
</feature>
<feature type="mutagenesis site" description="Impairs MAGEF1-NSMCE1-mediated polyubiquitination when associated with R-1002, 1007-R-R-1008 and R-1013." evidence="10">
    <original>K</original>
    <variation>R</variation>
    <location>
        <position position="993"/>
    </location>
</feature>
<feature type="mutagenesis site" description="Impairs MAGEF1-NSMCE1-mediated polyubiquitination when associated with R-993, 1007-R-R-1008 and R-1013." evidence="10">
    <original>K</original>
    <variation>R</variation>
    <location>
        <position position="1002"/>
    </location>
</feature>
<feature type="mutagenesis site" description="Impairs MAGEF1-NSMCE1-mediated polyubiquitination when associated with R-993, R-1002 and R-1013." evidence="10">
    <original>KK</original>
    <variation>RR</variation>
    <location>
        <begin position="1007"/>
        <end position="1008"/>
    </location>
</feature>
<feature type="mutagenesis site" description="Impairs MAGEF1-NSMCE1-mediated polyubiquitination when associated with R-993, R-1002 and 1007-R-R-1008." evidence="10">
    <original>K</original>
    <variation>R</variation>
    <location>
        <position position="1013"/>
    </location>
</feature>
<feature type="sequence conflict" description="In Ref. 2; AAK70402." evidence="17" ref="2">
    <original>Q</original>
    <variation>H</variation>
    <location>
        <position position="179"/>
    </location>
</feature>
<feature type="sequence conflict" description="In Ref. 2; AAK70402." evidence="17" ref="2">
    <original>V</original>
    <variation>D</variation>
    <location>
        <position position="389"/>
    </location>
</feature>
<feature type="sequence conflict" description="In Ref. 2; AAK70402." evidence="17" ref="2">
    <original>L</original>
    <variation>P</variation>
    <location>
        <position position="394"/>
    </location>
</feature>
<feature type="sequence conflict" description="In Ref. 4; BAG51657." evidence="17" ref="4">
    <original>Q</original>
    <variation>R</variation>
    <location>
        <position position="473"/>
    </location>
</feature>
<feature type="sequence conflict" description="In Ref. 4; BAG51657." evidence="17" ref="4">
    <original>CR</original>
    <variation>W</variation>
    <location>
        <begin position="502"/>
        <end position="503"/>
    </location>
</feature>
<feature type="sequence conflict" description="In Ref. 4; BAG65145." evidence="17" ref="4">
    <original>E</original>
    <variation>K</variation>
    <location>
        <position position="607"/>
    </location>
</feature>
<feature type="sequence conflict" description="In Ref. 4; BAB55315." evidence="17" ref="4">
    <original>E</original>
    <variation>G</variation>
    <location>
        <position position="640"/>
    </location>
</feature>
<feature type="sequence conflict" description="In Ref. 4; BAG65145." evidence="17" ref="4">
    <original>I</original>
    <variation>V</variation>
    <location>
        <position position="661"/>
    </location>
</feature>
<feature type="sequence conflict" description="In Ref. 2; AAK70402." evidence="17" ref="2">
    <original>L</original>
    <variation>F</variation>
    <location>
        <position position="741"/>
    </location>
</feature>
<name>MMS19_HUMAN</name>
<accession>Q96T76</accession>
<accession>B0QZ75</accession>
<accession>B3KPE5</accession>
<accession>B4DQX2</accession>
<accession>B4E2I3</accession>
<accession>D3DR55</accession>
<accession>F8W9Y2</accession>
<accession>Q17RZ8</accession>
<accession>Q5T455</accession>
<accession>Q66K82</accession>
<accession>Q7L4W8</accession>
<accession>Q969Z1</accession>
<accession>Q96DF1</accession>
<accession>Q96MR1</accession>
<accession>Q96RK5</accession>
<accession>Q96SK1</accession>
<accession>Q9BUE2</accession>
<accession>Q9BYS9</accession>
<proteinExistence type="evidence at protein level"/>
<organism>
    <name type="scientific">Homo sapiens</name>
    <name type="common">Human</name>
    <dbReference type="NCBI Taxonomy" id="9606"/>
    <lineage>
        <taxon>Eukaryota</taxon>
        <taxon>Metazoa</taxon>
        <taxon>Chordata</taxon>
        <taxon>Craniata</taxon>
        <taxon>Vertebrata</taxon>
        <taxon>Euteleostomi</taxon>
        <taxon>Mammalia</taxon>
        <taxon>Eutheria</taxon>
        <taxon>Euarchontoglires</taxon>
        <taxon>Primates</taxon>
        <taxon>Haplorrhini</taxon>
        <taxon>Catarrhini</taxon>
        <taxon>Hominidae</taxon>
        <taxon>Homo</taxon>
    </lineage>
</organism>